<sequence>MFTGQEYHSVDSNSNKQKDNNKRGIDDTSKILNNKIPHSVSDTSAAATTTSTMNNSALSRSLDPTDINYSTNMAGVVDQIHDYTTSNRNSLTPQYSIAAGNVNSHDRVVKPSANSNYQQAAYLRQQQQQDQRQQSPSMKTEEESQLYGDILMNSGVVQDMHQNLATHTNLSQLSSTRKSAPNDSTTAPTNASNIANTASVNKQMYFMNMNMNNNPHALNDPSILETLSPFFQPFGVDVAHLPMTNPPIFQSSLPGCDEPIRRRRISISNGQISQLGEDIETLENLHNTQPPPMPNFHNYNGLSQTRNVSNKPVFNQAVPVSSIPQYNAKKVINPTKDSALGDQSVIYSKSQQRNFVNAPSKNTPAESISDLEGMTTFAPTTGGENRGKSALRESHSNPSFTPKSQGSHLNLAANTQGNPIPGTTAWKRARLLERNRIAASKCRQRKKVAQLQLQKEFNEIKDENRILLKKLNYYEKLISKFKKFSKIHLREHEKLNKDSDNNVNGTNSSNKNESMTVDSLKIIEELLMIDSDVTEVDKDTGKIIAIKHEPYSQRFGSDTDDDDIDLKPVEGGKDPDNQSLPNSEKIK</sequence>
<proteinExistence type="evidence at protein level"/>
<comment type="function">
    <text>Transcriptional activator of promoters containing ATF/CREB sites. Can independently stimulate transcription through ATF/CREB sites. Important for a variety of biological functions including growth on non-optimal carbon sources.</text>
</comment>
<comment type="interaction">
    <interactant intactId="EBI-2052">
        <id>P40535</id>
    </interactant>
    <interactant intactId="EBI-22524">
        <id>P39970</id>
        <label>ACA1</label>
    </interactant>
    <organismsDiffer>false</organismsDiffer>
    <experiments>3</experiments>
</comment>
<comment type="subcellular location">
    <subcellularLocation>
        <location>Nucleus</location>
    </subcellularLocation>
</comment>
<comment type="miscellaneous">
    <text evidence="3">Present with 1240 molecules/cell in log phase SD medium.</text>
</comment>
<comment type="similarity">
    <text evidence="4">Belongs to the bZIP family.</text>
</comment>
<feature type="chain" id="PRO_0000076530" description="ATF/CREB activator 2">
    <location>
        <begin position="1"/>
        <end position="587"/>
    </location>
</feature>
<feature type="domain" description="bZIP" evidence="1">
    <location>
        <begin position="425"/>
        <end position="488"/>
    </location>
</feature>
<feature type="region of interest" description="Disordered" evidence="2">
    <location>
        <begin position="1"/>
        <end position="62"/>
    </location>
</feature>
<feature type="region of interest" description="Disordered" evidence="2">
    <location>
        <begin position="123"/>
        <end position="144"/>
    </location>
</feature>
<feature type="region of interest" description="Disordered" evidence="2">
    <location>
        <begin position="169"/>
        <end position="195"/>
    </location>
</feature>
<feature type="region of interest" description="Disordered" evidence="2">
    <location>
        <begin position="381"/>
        <end position="423"/>
    </location>
</feature>
<feature type="region of interest" description="Basic motif" evidence="1">
    <location>
        <begin position="427"/>
        <end position="447"/>
    </location>
</feature>
<feature type="region of interest" description="Leucine-zipper" evidence="1">
    <location>
        <begin position="453"/>
        <end position="467"/>
    </location>
</feature>
<feature type="region of interest" description="Disordered" evidence="2">
    <location>
        <begin position="552"/>
        <end position="587"/>
    </location>
</feature>
<feature type="compositionally biased region" description="Basic and acidic residues" evidence="2">
    <location>
        <begin position="16"/>
        <end position="29"/>
    </location>
</feature>
<feature type="compositionally biased region" description="Low complexity" evidence="2">
    <location>
        <begin position="39"/>
        <end position="57"/>
    </location>
</feature>
<feature type="compositionally biased region" description="Low complexity" evidence="2">
    <location>
        <begin position="123"/>
        <end position="134"/>
    </location>
</feature>
<feature type="compositionally biased region" description="Basic and acidic residues" evidence="2">
    <location>
        <begin position="385"/>
        <end position="395"/>
    </location>
</feature>
<feature type="compositionally biased region" description="Polar residues" evidence="2">
    <location>
        <begin position="396"/>
        <end position="418"/>
    </location>
</feature>
<feature type="compositionally biased region" description="Basic and acidic residues" evidence="2">
    <location>
        <begin position="565"/>
        <end position="576"/>
    </location>
</feature>
<feature type="compositionally biased region" description="Polar residues" evidence="2">
    <location>
        <begin position="577"/>
        <end position="587"/>
    </location>
</feature>
<feature type="modified residue" description="Phosphoserine" evidence="7">
    <location>
        <position position="171"/>
    </location>
</feature>
<feature type="modified residue" description="Phosphoserine" evidence="8">
    <location>
        <position position="179"/>
    </location>
</feature>
<feature type="modified residue" description="Phosphoserine" evidence="5">
    <location>
        <position position="399"/>
    </location>
</feature>
<feature type="modified residue" description="Phosphoserine" evidence="6 7 8">
    <location>
        <position position="557"/>
    </location>
</feature>
<feature type="modified residue" description="Phosphothreonine" evidence="5 6 7 8">
    <location>
        <position position="559"/>
    </location>
</feature>
<organism>
    <name type="scientific">Saccharomyces cerevisiae (strain ATCC 204508 / S288c)</name>
    <name type="common">Baker's yeast</name>
    <dbReference type="NCBI Taxonomy" id="559292"/>
    <lineage>
        <taxon>Eukaryota</taxon>
        <taxon>Fungi</taxon>
        <taxon>Dikarya</taxon>
        <taxon>Ascomycota</taxon>
        <taxon>Saccharomycotina</taxon>
        <taxon>Saccharomycetes</taxon>
        <taxon>Saccharomycetales</taxon>
        <taxon>Saccharomycetaceae</taxon>
        <taxon>Saccharomyces</taxon>
    </lineage>
</organism>
<dbReference type="EMBL" id="Z46861">
    <property type="protein sequence ID" value="CAA86915.1"/>
    <property type="molecule type" value="Genomic_DNA"/>
</dbReference>
<dbReference type="EMBL" id="BK006942">
    <property type="protein sequence ID" value="DAA08512.1"/>
    <property type="molecule type" value="Genomic_DNA"/>
</dbReference>
<dbReference type="PIR" id="S49942">
    <property type="entry name" value="S49942"/>
</dbReference>
<dbReference type="RefSeq" id="NP_012228.1">
    <property type="nucleotide sequence ID" value="NM_001179386.1"/>
</dbReference>
<dbReference type="SMR" id="P40535"/>
<dbReference type="BioGRID" id="34954">
    <property type="interactions" value="203"/>
</dbReference>
<dbReference type="FunCoup" id="P40535">
    <property type="interactions" value="2870"/>
</dbReference>
<dbReference type="IntAct" id="P40535">
    <property type="interactions" value="6"/>
</dbReference>
<dbReference type="MINT" id="P40535"/>
<dbReference type="STRING" id="4932.YIL036W"/>
<dbReference type="GlyGen" id="P40535">
    <property type="glycosylation" value="4 sites, 1 O-linked glycan (4 sites)"/>
</dbReference>
<dbReference type="iPTMnet" id="P40535"/>
<dbReference type="PaxDb" id="4932-YIL036W"/>
<dbReference type="PeptideAtlas" id="P40535"/>
<dbReference type="EnsemblFungi" id="YIL036W_mRNA">
    <property type="protein sequence ID" value="YIL036W"/>
    <property type="gene ID" value="YIL036W"/>
</dbReference>
<dbReference type="GeneID" id="854775"/>
<dbReference type="KEGG" id="sce:YIL036W"/>
<dbReference type="AGR" id="SGD:S000001298"/>
<dbReference type="SGD" id="S000001298">
    <property type="gene designation" value="CST6"/>
</dbReference>
<dbReference type="VEuPathDB" id="FungiDB:YIL036W"/>
<dbReference type="eggNOG" id="KOG1414">
    <property type="taxonomic scope" value="Eukaryota"/>
</dbReference>
<dbReference type="GeneTree" id="ENSGT00940000176485"/>
<dbReference type="HOGENOM" id="CLU_033100_0_0_1"/>
<dbReference type="InParanoid" id="P40535"/>
<dbReference type="OMA" id="IPGTTAW"/>
<dbReference type="OrthoDB" id="295274at2759"/>
<dbReference type="BioCyc" id="YEAST:G3O-31308-MONOMER"/>
<dbReference type="Reactome" id="R-SCE-3214847">
    <property type="pathway name" value="HATs acetylate histones"/>
</dbReference>
<dbReference type="Reactome" id="R-SCE-450341">
    <property type="pathway name" value="Activation of the AP-1 family of transcription factors"/>
</dbReference>
<dbReference type="BioGRID-ORCS" id="854775">
    <property type="hits" value="9 hits in 13 CRISPR screens"/>
</dbReference>
<dbReference type="PRO" id="PR:P40535"/>
<dbReference type="Proteomes" id="UP000002311">
    <property type="component" value="Chromosome IX"/>
</dbReference>
<dbReference type="RNAct" id="P40535">
    <property type="molecule type" value="protein"/>
</dbReference>
<dbReference type="GO" id="GO:0005829">
    <property type="term" value="C:cytosol"/>
    <property type="evidence" value="ECO:0000314"/>
    <property type="project" value="SGD"/>
</dbReference>
<dbReference type="GO" id="GO:0005634">
    <property type="term" value="C:nucleus"/>
    <property type="evidence" value="ECO:0000314"/>
    <property type="project" value="SGD"/>
</dbReference>
<dbReference type="GO" id="GO:0001228">
    <property type="term" value="F:DNA-binding transcription activator activity, RNA polymerase II-specific"/>
    <property type="evidence" value="ECO:0000314"/>
    <property type="project" value="SGD"/>
</dbReference>
<dbReference type="GO" id="GO:0000981">
    <property type="term" value="F:DNA-binding transcription factor activity, RNA polymerase II-specific"/>
    <property type="evidence" value="ECO:0000318"/>
    <property type="project" value="GO_Central"/>
</dbReference>
<dbReference type="GO" id="GO:0000978">
    <property type="term" value="F:RNA polymerase II cis-regulatory region sequence-specific DNA binding"/>
    <property type="evidence" value="ECO:0000318"/>
    <property type="project" value="GO_Central"/>
</dbReference>
<dbReference type="GO" id="GO:0043565">
    <property type="term" value="F:sequence-specific DNA binding"/>
    <property type="evidence" value="ECO:0000314"/>
    <property type="project" value="SGD"/>
</dbReference>
<dbReference type="GO" id="GO:0071244">
    <property type="term" value="P:cellular response to carbon dioxide"/>
    <property type="evidence" value="ECO:0000315"/>
    <property type="project" value="SGD"/>
</dbReference>
<dbReference type="GO" id="GO:0071400">
    <property type="term" value="P:cellular response to oleic acid"/>
    <property type="evidence" value="ECO:0000315"/>
    <property type="project" value="SGD"/>
</dbReference>
<dbReference type="GO" id="GO:0033554">
    <property type="term" value="P:cellular response to stress"/>
    <property type="evidence" value="ECO:0000314"/>
    <property type="project" value="SGD"/>
</dbReference>
<dbReference type="GO" id="GO:0045944">
    <property type="term" value="P:positive regulation of transcription by RNA polymerase II"/>
    <property type="evidence" value="ECO:0000314"/>
    <property type="project" value="SGD"/>
</dbReference>
<dbReference type="GO" id="GO:0006357">
    <property type="term" value="P:regulation of transcription by RNA polymerase II"/>
    <property type="evidence" value="ECO:0000314"/>
    <property type="project" value="SGD"/>
</dbReference>
<dbReference type="CDD" id="cd14687">
    <property type="entry name" value="bZIP_ATF2"/>
    <property type="match status" value="1"/>
</dbReference>
<dbReference type="FunFam" id="1.20.5.170:FF:000053">
    <property type="entry name" value="BZIP transcription factor AtfA"/>
    <property type="match status" value="1"/>
</dbReference>
<dbReference type="Gene3D" id="1.20.5.170">
    <property type="match status" value="1"/>
</dbReference>
<dbReference type="InterPro" id="IPR004827">
    <property type="entry name" value="bZIP"/>
</dbReference>
<dbReference type="InterPro" id="IPR046347">
    <property type="entry name" value="bZIP_sf"/>
</dbReference>
<dbReference type="InterPro" id="IPR051027">
    <property type="entry name" value="bZIP_transcription_factors"/>
</dbReference>
<dbReference type="PANTHER" id="PTHR19304">
    <property type="entry name" value="CYCLIC-AMP RESPONSE ELEMENT BINDING PROTEIN"/>
    <property type="match status" value="1"/>
</dbReference>
<dbReference type="Pfam" id="PF00170">
    <property type="entry name" value="bZIP_1"/>
    <property type="match status" value="1"/>
</dbReference>
<dbReference type="SMART" id="SM00338">
    <property type="entry name" value="BRLZ"/>
    <property type="match status" value="1"/>
</dbReference>
<dbReference type="SUPFAM" id="SSF57959">
    <property type="entry name" value="Leucine zipper domain"/>
    <property type="match status" value="1"/>
</dbReference>
<dbReference type="PROSITE" id="PS50217">
    <property type="entry name" value="BZIP"/>
    <property type="match status" value="1"/>
</dbReference>
<dbReference type="PROSITE" id="PS00036">
    <property type="entry name" value="BZIP_BASIC"/>
    <property type="match status" value="1"/>
</dbReference>
<gene>
    <name type="primary">CST6</name>
    <name type="synonym">ACA2</name>
    <name type="ordered locus">YIL036W</name>
</gene>
<reference key="1">
    <citation type="journal article" date="1997" name="Nature">
        <title>The nucleotide sequence of Saccharomyces cerevisiae chromosome IX.</title>
        <authorList>
            <person name="Churcher C.M."/>
            <person name="Bowman S."/>
            <person name="Badcock K."/>
            <person name="Bankier A.T."/>
            <person name="Brown D."/>
            <person name="Chillingworth T."/>
            <person name="Connor R."/>
            <person name="Devlin K."/>
            <person name="Gentles S."/>
            <person name="Hamlin N."/>
            <person name="Harris D.E."/>
            <person name="Horsnell T."/>
            <person name="Hunt S."/>
            <person name="Jagels K."/>
            <person name="Jones M."/>
            <person name="Lye G."/>
            <person name="Moule S."/>
            <person name="Odell C."/>
            <person name="Pearson D."/>
            <person name="Rajandream M.A."/>
            <person name="Rice P."/>
            <person name="Rowley N."/>
            <person name="Skelton J."/>
            <person name="Smith V."/>
            <person name="Walsh S.V."/>
            <person name="Whitehead S."/>
            <person name="Barrell B.G."/>
        </authorList>
    </citation>
    <scope>NUCLEOTIDE SEQUENCE [LARGE SCALE GENOMIC DNA]</scope>
    <source>
        <strain>ATCC 204508 / S288c</strain>
    </source>
</reference>
<reference key="2">
    <citation type="journal article" date="2014" name="G3 (Bethesda)">
        <title>The reference genome sequence of Saccharomyces cerevisiae: Then and now.</title>
        <authorList>
            <person name="Engel S.R."/>
            <person name="Dietrich F.S."/>
            <person name="Fisk D.G."/>
            <person name="Binkley G."/>
            <person name="Balakrishnan R."/>
            <person name="Costanzo M.C."/>
            <person name="Dwight S.S."/>
            <person name="Hitz B.C."/>
            <person name="Karra K."/>
            <person name="Nash R.S."/>
            <person name="Weng S."/>
            <person name="Wong E.D."/>
            <person name="Lloyd P."/>
            <person name="Skrzypek M.S."/>
            <person name="Miyasato S.R."/>
            <person name="Simison M."/>
            <person name="Cherry J.M."/>
        </authorList>
    </citation>
    <scope>GENOME REANNOTATION</scope>
    <source>
        <strain>ATCC 204508 / S288c</strain>
    </source>
</reference>
<reference key="3">
    <citation type="journal article" date="1999" name="Nucleic Acids Res.">
        <title>New yeast genes important for chromosome integrity and segregation identified by dosage effects on genome stability.</title>
        <authorList>
            <person name="Ouspenski I.I."/>
            <person name="Elledge S.J."/>
            <person name="Brinkley B.R."/>
        </authorList>
    </citation>
    <scope>IDENTIFICATION</scope>
</reference>
<reference key="4">
    <citation type="journal article" date="2000" name="Mol. Cell. Biol.">
        <title>Aca1 and Aca2, ATF/CREB activators in Saccharomyces cerevisiae, are important for carbon source utilization but not the response to stress.</title>
        <authorList>
            <person name="Garcia-Gimeno M.A."/>
            <person name="Struhl K."/>
        </authorList>
    </citation>
    <scope>CHARACTERIZATION</scope>
</reference>
<reference key="5">
    <citation type="journal article" date="2003" name="Nature">
        <title>Global analysis of protein expression in yeast.</title>
        <authorList>
            <person name="Ghaemmaghami S."/>
            <person name="Huh W.-K."/>
            <person name="Bower K."/>
            <person name="Howson R.W."/>
            <person name="Belle A."/>
            <person name="Dephoure N."/>
            <person name="O'Shea E.K."/>
            <person name="Weissman J.S."/>
        </authorList>
    </citation>
    <scope>LEVEL OF PROTEIN EXPRESSION [LARGE SCALE ANALYSIS]</scope>
</reference>
<reference key="6">
    <citation type="journal article" date="2007" name="J. Proteome Res.">
        <title>Large-scale phosphorylation analysis of alpha-factor-arrested Saccharomyces cerevisiae.</title>
        <authorList>
            <person name="Li X."/>
            <person name="Gerber S.A."/>
            <person name="Rudner A.D."/>
            <person name="Beausoleil S.A."/>
            <person name="Haas W."/>
            <person name="Villen J."/>
            <person name="Elias J.E."/>
            <person name="Gygi S.P."/>
        </authorList>
    </citation>
    <scope>PHOSPHORYLATION [LARGE SCALE ANALYSIS] AT SER-557 AND THR-559</scope>
    <scope>IDENTIFICATION BY MASS SPECTROMETRY [LARGE SCALE ANALYSIS]</scope>
    <source>
        <strain>ADR376</strain>
    </source>
</reference>
<reference key="7">
    <citation type="journal article" date="2007" name="Proc. Natl. Acad. Sci. U.S.A.">
        <title>Analysis of phosphorylation sites on proteins from Saccharomyces cerevisiae by electron transfer dissociation (ETD) mass spectrometry.</title>
        <authorList>
            <person name="Chi A."/>
            <person name="Huttenhower C."/>
            <person name="Geer L.Y."/>
            <person name="Coon J.J."/>
            <person name="Syka J.E.P."/>
            <person name="Bai D.L."/>
            <person name="Shabanowitz J."/>
            <person name="Burke D.J."/>
            <person name="Troyanskaya O.G."/>
            <person name="Hunt D.F."/>
        </authorList>
    </citation>
    <scope>PHOSPHORYLATION [LARGE SCALE ANALYSIS] AT SER-399 AND THR-559</scope>
    <scope>IDENTIFICATION BY MASS SPECTROMETRY [LARGE SCALE ANALYSIS]</scope>
</reference>
<reference key="8">
    <citation type="journal article" date="2008" name="Mol. Cell. Proteomics">
        <title>A multidimensional chromatography technology for in-depth phosphoproteome analysis.</title>
        <authorList>
            <person name="Albuquerque C.P."/>
            <person name="Smolka M.B."/>
            <person name="Payne S.H."/>
            <person name="Bafna V."/>
            <person name="Eng J."/>
            <person name="Zhou H."/>
        </authorList>
    </citation>
    <scope>PHOSPHORYLATION [LARGE SCALE ANALYSIS] AT SER-171; SER-557 AND THR-559</scope>
    <scope>IDENTIFICATION BY MASS SPECTROMETRY [LARGE SCALE ANALYSIS]</scope>
</reference>
<reference key="9">
    <citation type="journal article" date="2009" name="Science">
        <title>Global analysis of Cdk1 substrate phosphorylation sites provides insights into evolution.</title>
        <authorList>
            <person name="Holt L.J."/>
            <person name="Tuch B.B."/>
            <person name="Villen J."/>
            <person name="Johnson A.D."/>
            <person name="Gygi S.P."/>
            <person name="Morgan D.O."/>
        </authorList>
    </citation>
    <scope>PHOSPHORYLATION [LARGE SCALE ANALYSIS] AT SER-179; SER-557 AND THR-559</scope>
    <scope>IDENTIFICATION BY MASS SPECTROMETRY [LARGE SCALE ANALYSIS]</scope>
</reference>
<evidence type="ECO:0000255" key="1">
    <source>
        <dbReference type="PROSITE-ProRule" id="PRU00978"/>
    </source>
</evidence>
<evidence type="ECO:0000256" key="2">
    <source>
        <dbReference type="SAM" id="MobiDB-lite"/>
    </source>
</evidence>
<evidence type="ECO:0000269" key="3">
    <source>
    </source>
</evidence>
<evidence type="ECO:0000305" key="4"/>
<evidence type="ECO:0007744" key="5">
    <source>
    </source>
</evidence>
<evidence type="ECO:0007744" key="6">
    <source>
    </source>
</evidence>
<evidence type="ECO:0007744" key="7">
    <source>
    </source>
</evidence>
<evidence type="ECO:0007744" key="8">
    <source>
    </source>
</evidence>
<accession>P40535</accession>
<accession>D6VVP6</accession>
<protein>
    <recommendedName>
        <fullName>ATF/CREB activator 2</fullName>
    </recommendedName>
    <alternativeName>
        <fullName>Chromosome stability protein CST6</fullName>
    </alternativeName>
</protein>
<keyword id="KW-0238">DNA-binding</keyword>
<keyword id="KW-0539">Nucleus</keyword>
<keyword id="KW-0597">Phosphoprotein</keyword>
<keyword id="KW-1185">Reference proteome</keyword>
<keyword id="KW-0678">Repressor</keyword>
<keyword id="KW-0804">Transcription</keyword>
<keyword id="KW-0805">Transcription regulation</keyword>
<name>ACA2_YEAST</name>